<gene>
    <name evidence="3" type="primary">NPIPA6</name>
</gene>
<reference key="1">
    <citation type="journal article" date="2004" name="Nature">
        <title>The sequence and analysis of duplication-rich human chromosome 16.</title>
        <authorList>
            <person name="Martin J."/>
            <person name="Han C."/>
            <person name="Gordon L.A."/>
            <person name="Terry A."/>
            <person name="Prabhakar S."/>
            <person name="She X."/>
            <person name="Xie G."/>
            <person name="Hellsten U."/>
            <person name="Chan Y.M."/>
            <person name="Altherr M."/>
            <person name="Couronne O."/>
            <person name="Aerts A."/>
            <person name="Bajorek E."/>
            <person name="Black S."/>
            <person name="Blumer H."/>
            <person name="Branscomb E."/>
            <person name="Brown N.C."/>
            <person name="Bruno W.J."/>
            <person name="Buckingham J.M."/>
            <person name="Callen D.F."/>
            <person name="Campbell C.S."/>
            <person name="Campbell M.L."/>
            <person name="Campbell E.W."/>
            <person name="Caoile C."/>
            <person name="Challacombe J.F."/>
            <person name="Chasteen L.A."/>
            <person name="Chertkov O."/>
            <person name="Chi H.C."/>
            <person name="Christensen M."/>
            <person name="Clark L.M."/>
            <person name="Cohn J.D."/>
            <person name="Denys M."/>
            <person name="Detter J.C."/>
            <person name="Dickson M."/>
            <person name="Dimitrijevic-Bussod M."/>
            <person name="Escobar J."/>
            <person name="Fawcett J.J."/>
            <person name="Flowers D."/>
            <person name="Fotopulos D."/>
            <person name="Glavina T."/>
            <person name="Gomez M."/>
            <person name="Gonzales E."/>
            <person name="Goodstein D."/>
            <person name="Goodwin L.A."/>
            <person name="Grady D.L."/>
            <person name="Grigoriev I."/>
            <person name="Groza M."/>
            <person name="Hammon N."/>
            <person name="Hawkins T."/>
            <person name="Haydu L."/>
            <person name="Hildebrand C.E."/>
            <person name="Huang W."/>
            <person name="Israni S."/>
            <person name="Jett J."/>
            <person name="Jewett P.B."/>
            <person name="Kadner K."/>
            <person name="Kimball H."/>
            <person name="Kobayashi A."/>
            <person name="Krawczyk M.-C."/>
            <person name="Leyba T."/>
            <person name="Longmire J.L."/>
            <person name="Lopez F."/>
            <person name="Lou Y."/>
            <person name="Lowry S."/>
            <person name="Ludeman T."/>
            <person name="Manohar C.F."/>
            <person name="Mark G.A."/>
            <person name="McMurray K.L."/>
            <person name="Meincke L.J."/>
            <person name="Morgan J."/>
            <person name="Moyzis R.K."/>
            <person name="Mundt M.O."/>
            <person name="Munk A.C."/>
            <person name="Nandkeshwar R.D."/>
            <person name="Pitluck S."/>
            <person name="Pollard M."/>
            <person name="Predki P."/>
            <person name="Parson-Quintana B."/>
            <person name="Ramirez L."/>
            <person name="Rash S."/>
            <person name="Retterer J."/>
            <person name="Ricke D.O."/>
            <person name="Robinson D.L."/>
            <person name="Rodriguez A."/>
            <person name="Salamov A."/>
            <person name="Saunders E.H."/>
            <person name="Scott D."/>
            <person name="Shough T."/>
            <person name="Stallings R.L."/>
            <person name="Stalvey M."/>
            <person name="Sutherland R.D."/>
            <person name="Tapia R."/>
            <person name="Tesmer J.G."/>
            <person name="Thayer N."/>
            <person name="Thompson L.S."/>
            <person name="Tice H."/>
            <person name="Torney D.C."/>
            <person name="Tran-Gyamfi M."/>
            <person name="Tsai M."/>
            <person name="Ulanovsky L.E."/>
            <person name="Ustaszewska A."/>
            <person name="Vo N."/>
            <person name="White P.S."/>
            <person name="Williams A.L."/>
            <person name="Wills P.L."/>
            <person name="Wu J.-R."/>
            <person name="Wu K."/>
            <person name="Yang J."/>
            <person name="DeJong P."/>
            <person name="Bruce D."/>
            <person name="Doggett N.A."/>
            <person name="Deaven L."/>
            <person name="Schmutz J."/>
            <person name="Grimwood J."/>
            <person name="Richardson P."/>
            <person name="Rokhsar D.S."/>
            <person name="Eichler E.E."/>
            <person name="Gilna P."/>
            <person name="Lucas S.M."/>
            <person name="Myers R.M."/>
            <person name="Rubin E.M."/>
            <person name="Pennacchio L.A."/>
        </authorList>
    </citation>
    <scope>NUCLEOTIDE SEQUENCE [LARGE SCALE GENOMIC DNA]</scope>
</reference>
<protein>
    <recommendedName>
        <fullName evidence="2">Nuclear pore complex-interacting protein family member A6</fullName>
    </recommendedName>
</protein>
<dbReference type="EMBL" id="AC138969">
    <property type="status" value="NOT_ANNOTATED_CDS"/>
    <property type="molecule type" value="Genomic_DNA"/>
</dbReference>
<dbReference type="RefSeq" id="NP_001410765.1">
    <property type="nucleotide sequence ID" value="NM_001423836.2"/>
</dbReference>
<dbReference type="SMR" id="P0DXC3"/>
<dbReference type="Ensembl" id="ENST00000381497.7">
    <property type="protein sequence ID" value="ENSP00000370908.2"/>
    <property type="gene ID" value="ENSG00000183889.13"/>
</dbReference>
<dbReference type="Ensembl" id="ENST00000634011.1">
    <property type="protein sequence ID" value="ENSP00000487876.1"/>
    <property type="gene ID" value="ENSG00000273807.2"/>
</dbReference>
<dbReference type="GeneID" id="131675794"/>
<dbReference type="MANE-Select" id="ENST00000381497.7">
    <property type="protein sequence ID" value="ENSP00000370908.2"/>
    <property type="RefSeq nucleotide sequence ID" value="NM_001423836.2"/>
    <property type="RefSeq protein sequence ID" value="NP_001410765.1"/>
</dbReference>
<dbReference type="AGR" id="HGNC:27893"/>
<dbReference type="GeneCards" id="NPIPA6"/>
<dbReference type="HGNC" id="HGNC:27893">
    <property type="gene designation" value="NPIPA6"/>
</dbReference>
<dbReference type="GeneTree" id="ENSGT00540000072033"/>
<dbReference type="Proteomes" id="UP000005640">
    <property type="component" value="Chromosome 16"/>
</dbReference>
<dbReference type="InterPro" id="IPR009443">
    <property type="entry name" value="NPIP"/>
</dbReference>
<dbReference type="InterPro" id="IPR054697">
    <property type="entry name" value="NPIP_N"/>
</dbReference>
<dbReference type="PANTHER" id="PTHR15438">
    <property type="entry name" value="NUCLEAR PORE COMPLEX INTERACTING PROTEIN"/>
    <property type="match status" value="1"/>
</dbReference>
<dbReference type="PANTHER" id="PTHR15438:SF5">
    <property type="entry name" value="NUCLEAR PORE COMPLEX-INTERACTING PROTEIN FAMILY MEMBER A2-RELATED"/>
    <property type="match status" value="1"/>
</dbReference>
<dbReference type="Pfam" id="PF06409">
    <property type="entry name" value="NPIP"/>
    <property type="match status" value="1"/>
</dbReference>
<sequence length="369" mass="42104">MFCCLGYEWLSGGCKTWHSAWVINTLADHRHRGTDFGGSPWLLIITVFLRSYKFAISLCTSYLCVSFLKTIFPSQNGHDGSTDVQQRARRSNCRRQEGIKIVLEDIFTLWRQVETKVRAKIRKMKVTTKVNRHDKINGKRKTAKEHLRKLSMKEREHGEKERQVSEAEENGKLDMKEIHTYMEMFQRAQALRRRAEDYYRCKITPSARKPLCNRVRMAAVEHRHSSGLPYWPYLTAETLKNRMGHQPPPPTQQHSIIDNSLSLKTPSECVLYPLPPSADDNLKTPPECLLTPLPPSALPSADDNLKTPAECLLYPLPPSADDNLKTPPECLLTPLPPSAPPSADDNLKTPPECVCSLPFHPQRMIISRN</sequence>
<proteinExistence type="inferred from homology"/>
<keyword id="KW-1185">Reference proteome</keyword>
<accession>P0DXC3</accession>
<evidence type="ECO:0000256" key="1">
    <source>
        <dbReference type="SAM" id="MobiDB-lite"/>
    </source>
</evidence>
<evidence type="ECO:0000305" key="2"/>
<evidence type="ECO:0000312" key="3">
    <source>
        <dbReference type="HGNC" id="HGNC:27893"/>
    </source>
</evidence>
<name>NPIA6_HUMAN</name>
<comment type="similarity">
    <text evidence="2">Belongs to the NPIP family.</text>
</comment>
<feature type="chain" id="PRO_0000460143" description="Nuclear pore complex-interacting protein family member A6">
    <location>
        <begin position="1"/>
        <end position="369"/>
    </location>
</feature>
<feature type="region of interest" description="Disordered" evidence="1">
    <location>
        <begin position="151"/>
        <end position="170"/>
    </location>
</feature>
<organism>
    <name type="scientific">Homo sapiens</name>
    <name type="common">Human</name>
    <dbReference type="NCBI Taxonomy" id="9606"/>
    <lineage>
        <taxon>Eukaryota</taxon>
        <taxon>Metazoa</taxon>
        <taxon>Chordata</taxon>
        <taxon>Craniata</taxon>
        <taxon>Vertebrata</taxon>
        <taxon>Euteleostomi</taxon>
        <taxon>Mammalia</taxon>
        <taxon>Eutheria</taxon>
        <taxon>Euarchontoglires</taxon>
        <taxon>Primates</taxon>
        <taxon>Haplorrhini</taxon>
        <taxon>Catarrhini</taxon>
        <taxon>Hominidae</taxon>
        <taxon>Homo</taxon>
    </lineage>
</organism>